<evidence type="ECO:0000250" key="1"/>
<evidence type="ECO:0000269" key="2">
    <source ref="1"/>
</evidence>
<evidence type="ECO:0000303" key="3">
    <source ref="1"/>
</evidence>
<evidence type="ECO:0000305" key="4"/>
<keyword id="KW-0878">Amphibian defense peptide</keyword>
<keyword id="KW-0903">Direct protein sequencing</keyword>
<keyword id="KW-1213">G-protein coupled receptor impairing toxin</keyword>
<keyword id="KW-0964">Secreted</keyword>
<keyword id="KW-0800">Toxin</keyword>
<keyword id="KW-0838">Vasoactive</keyword>
<keyword id="KW-0840">Vasodilator</keyword>
<protein>
    <recommendedName>
        <fullName evidence="3">[Ala1,Thr6]-bradykinyl-Ser,Lys</fullName>
    </recommendedName>
</protein>
<feature type="peptide" id="PRO_0000404689" description="[Ala1,Thr6]-bradykinyl-Ser,Lys" evidence="2">
    <location>
        <begin position="1"/>
        <end position="11"/>
    </location>
</feature>
<proteinExistence type="evidence at protein level"/>
<reference evidence="4" key="1">
    <citation type="submission" date="2010-09" db="UniProtKB">
        <title>Bradykinin-related peptides in skin secretion of Physalaemus signifer (Girard, 1853) (Anura, Leiuperidae).</title>
        <authorList>
            <person name="Rates B."/>
            <person name="Ireno I.C."/>
            <person name="Canelas M.A."/>
            <person name="de Lima M.E."/>
            <person name="Pimenta A.M.C."/>
        </authorList>
    </citation>
    <scope>PROTEIN SEQUENCE</scope>
    <scope>SUBCELLULAR LOCATION</scope>
    <scope>TISSUE SPECIFICITY</scope>
    <source>
        <tissue evidence="2">Skin secretion</tissue>
    </source>
</reference>
<sequence>APPGFTPFRSK</sequence>
<name>BRK4_PHYSG</name>
<comment type="function">
    <text evidence="1">Produces in vitro relaxation of rat arterial smooth muscle and constriction of intestinal smooth muscle (By similarity). May target bradykinin receptors (BDKRB).</text>
</comment>
<comment type="subcellular location">
    <subcellularLocation>
        <location evidence="2">Secreted</location>
    </subcellularLocation>
</comment>
<comment type="tissue specificity">
    <text evidence="2">Expressed by the skin glands.</text>
</comment>
<comment type="similarity">
    <text evidence="4">Belongs to the bradykinin-related peptide family.</text>
</comment>
<dbReference type="GO" id="GO:0005576">
    <property type="term" value="C:extracellular region"/>
    <property type="evidence" value="ECO:0007669"/>
    <property type="project" value="UniProtKB-SubCell"/>
</dbReference>
<dbReference type="GO" id="GO:0005179">
    <property type="term" value="F:hormone activity"/>
    <property type="evidence" value="ECO:0007669"/>
    <property type="project" value="InterPro"/>
</dbReference>
<dbReference type="GO" id="GO:0090729">
    <property type="term" value="F:toxin activity"/>
    <property type="evidence" value="ECO:0007669"/>
    <property type="project" value="UniProtKB-KW"/>
</dbReference>
<dbReference type="GO" id="GO:0006952">
    <property type="term" value="P:defense response"/>
    <property type="evidence" value="ECO:0007669"/>
    <property type="project" value="UniProtKB-KW"/>
</dbReference>
<dbReference type="GO" id="GO:0042311">
    <property type="term" value="P:vasodilation"/>
    <property type="evidence" value="ECO:0007669"/>
    <property type="project" value="UniProtKB-KW"/>
</dbReference>
<dbReference type="InterPro" id="IPR009608">
    <property type="entry name" value="Bradykinin"/>
</dbReference>
<dbReference type="Pfam" id="PF06753">
    <property type="entry name" value="Bradykinin"/>
    <property type="match status" value="1"/>
</dbReference>
<organism>
    <name type="scientific">Physalaemus signifer</name>
    <name type="common">Girard's dwarf frog</name>
    <dbReference type="NCBI Taxonomy" id="364768"/>
    <lineage>
        <taxon>Eukaryota</taxon>
        <taxon>Metazoa</taxon>
        <taxon>Chordata</taxon>
        <taxon>Craniata</taxon>
        <taxon>Vertebrata</taxon>
        <taxon>Euteleostomi</taxon>
        <taxon>Amphibia</taxon>
        <taxon>Batrachia</taxon>
        <taxon>Anura</taxon>
        <taxon>Neobatrachia</taxon>
        <taxon>Hyloidea</taxon>
        <taxon>Leptodactylidae</taxon>
        <taxon>Leiuperinae</taxon>
        <taxon>Physalaemus</taxon>
    </lineage>
</organism>
<accession>P86814</accession>